<accession>Q6EW63</accession>
<name>ATPA_NYMAL</name>
<organism>
    <name type="scientific">Nymphaea alba</name>
    <name type="common">White water-lily</name>
    <name type="synonym">Castalia alba</name>
    <dbReference type="NCBI Taxonomy" id="34301"/>
    <lineage>
        <taxon>Eukaryota</taxon>
        <taxon>Viridiplantae</taxon>
        <taxon>Streptophyta</taxon>
        <taxon>Embryophyta</taxon>
        <taxon>Tracheophyta</taxon>
        <taxon>Spermatophyta</taxon>
        <taxon>Magnoliopsida</taxon>
        <taxon>Nymphaeales</taxon>
        <taxon>Nymphaeaceae</taxon>
        <taxon>Nymphaea</taxon>
    </lineage>
</organism>
<feature type="chain" id="PRO_0000238429" description="ATP synthase subunit alpha, chloroplastic">
    <location>
        <begin position="1"/>
        <end position="507"/>
    </location>
</feature>
<feature type="binding site" evidence="1">
    <location>
        <begin position="170"/>
        <end position="177"/>
    </location>
    <ligand>
        <name>ATP</name>
        <dbReference type="ChEBI" id="CHEBI:30616"/>
    </ligand>
</feature>
<feature type="site" description="Required for activity" evidence="1">
    <location>
        <position position="363"/>
    </location>
</feature>
<gene>
    <name evidence="1" type="primary">atpA</name>
</gene>
<evidence type="ECO:0000255" key="1">
    <source>
        <dbReference type="HAMAP-Rule" id="MF_01346"/>
    </source>
</evidence>
<protein>
    <recommendedName>
        <fullName evidence="1">ATP synthase subunit alpha, chloroplastic</fullName>
        <ecNumber evidence="1">7.1.2.2</ecNumber>
    </recommendedName>
    <alternativeName>
        <fullName evidence="1">ATP synthase F1 sector subunit alpha</fullName>
    </alternativeName>
    <alternativeName>
        <fullName evidence="1">F-ATPase subunit alpha</fullName>
    </alternativeName>
</protein>
<proteinExistence type="inferred from homology"/>
<reference key="1">
    <citation type="journal article" date="2004" name="Mol. Biol. Evol.">
        <title>The chloroplast genome of Nymphaea alba: whole-genome analyses and the problem of identifying the most basal angiosperm.</title>
        <authorList>
            <person name="Goremykin V.V."/>
            <person name="Hirsch-Ernst K.I."/>
            <person name="Woelfl S."/>
            <person name="Hellwig F.H."/>
        </authorList>
    </citation>
    <scope>NUCLEOTIDE SEQUENCE [LARGE SCALE GENOMIC DNA]</scope>
</reference>
<keyword id="KW-0066">ATP synthesis</keyword>
<keyword id="KW-0067">ATP-binding</keyword>
<keyword id="KW-0139">CF(1)</keyword>
<keyword id="KW-0150">Chloroplast</keyword>
<keyword id="KW-0375">Hydrogen ion transport</keyword>
<keyword id="KW-0406">Ion transport</keyword>
<keyword id="KW-0472">Membrane</keyword>
<keyword id="KW-0547">Nucleotide-binding</keyword>
<keyword id="KW-0934">Plastid</keyword>
<keyword id="KW-0793">Thylakoid</keyword>
<keyword id="KW-1278">Translocase</keyword>
<keyword id="KW-0813">Transport</keyword>
<dbReference type="EC" id="7.1.2.2" evidence="1"/>
<dbReference type="EMBL" id="AJ627251">
    <property type="protein sequence ID" value="CAF28578.1"/>
    <property type="molecule type" value="Genomic_DNA"/>
</dbReference>
<dbReference type="RefSeq" id="YP_053140.1">
    <property type="nucleotide sequence ID" value="NC_006050.1"/>
</dbReference>
<dbReference type="SMR" id="Q6EW63"/>
<dbReference type="GeneID" id="2896230"/>
<dbReference type="GO" id="GO:0009535">
    <property type="term" value="C:chloroplast thylakoid membrane"/>
    <property type="evidence" value="ECO:0007669"/>
    <property type="project" value="UniProtKB-SubCell"/>
</dbReference>
<dbReference type="GO" id="GO:0045259">
    <property type="term" value="C:proton-transporting ATP synthase complex"/>
    <property type="evidence" value="ECO:0007669"/>
    <property type="project" value="UniProtKB-KW"/>
</dbReference>
<dbReference type="GO" id="GO:0043531">
    <property type="term" value="F:ADP binding"/>
    <property type="evidence" value="ECO:0007669"/>
    <property type="project" value="TreeGrafter"/>
</dbReference>
<dbReference type="GO" id="GO:0005524">
    <property type="term" value="F:ATP binding"/>
    <property type="evidence" value="ECO:0007669"/>
    <property type="project" value="UniProtKB-UniRule"/>
</dbReference>
<dbReference type="GO" id="GO:0046933">
    <property type="term" value="F:proton-transporting ATP synthase activity, rotational mechanism"/>
    <property type="evidence" value="ECO:0007669"/>
    <property type="project" value="UniProtKB-UniRule"/>
</dbReference>
<dbReference type="CDD" id="cd18113">
    <property type="entry name" value="ATP-synt_F1_alpha_C"/>
    <property type="match status" value="1"/>
</dbReference>
<dbReference type="CDD" id="cd18116">
    <property type="entry name" value="ATP-synt_F1_alpha_N"/>
    <property type="match status" value="1"/>
</dbReference>
<dbReference type="CDD" id="cd01132">
    <property type="entry name" value="F1-ATPase_alpha_CD"/>
    <property type="match status" value="1"/>
</dbReference>
<dbReference type="FunFam" id="1.20.150.20:FF:000001">
    <property type="entry name" value="ATP synthase subunit alpha"/>
    <property type="match status" value="1"/>
</dbReference>
<dbReference type="FunFam" id="2.40.30.20:FF:000001">
    <property type="entry name" value="ATP synthase subunit alpha"/>
    <property type="match status" value="1"/>
</dbReference>
<dbReference type="FunFam" id="3.40.50.300:FF:000002">
    <property type="entry name" value="ATP synthase subunit alpha"/>
    <property type="match status" value="1"/>
</dbReference>
<dbReference type="Gene3D" id="2.40.30.20">
    <property type="match status" value="1"/>
</dbReference>
<dbReference type="Gene3D" id="1.20.150.20">
    <property type="entry name" value="ATP synthase alpha/beta chain, C-terminal domain"/>
    <property type="match status" value="1"/>
</dbReference>
<dbReference type="Gene3D" id="3.40.50.300">
    <property type="entry name" value="P-loop containing nucleotide triphosphate hydrolases"/>
    <property type="match status" value="1"/>
</dbReference>
<dbReference type="HAMAP" id="MF_01346">
    <property type="entry name" value="ATP_synth_alpha_bact"/>
    <property type="match status" value="1"/>
</dbReference>
<dbReference type="InterPro" id="IPR023366">
    <property type="entry name" value="ATP_synth_asu-like_sf"/>
</dbReference>
<dbReference type="InterPro" id="IPR000793">
    <property type="entry name" value="ATP_synth_asu_C"/>
</dbReference>
<dbReference type="InterPro" id="IPR038376">
    <property type="entry name" value="ATP_synth_asu_C_sf"/>
</dbReference>
<dbReference type="InterPro" id="IPR033732">
    <property type="entry name" value="ATP_synth_F1_a_nt-bd_dom"/>
</dbReference>
<dbReference type="InterPro" id="IPR005294">
    <property type="entry name" value="ATP_synth_F1_asu"/>
</dbReference>
<dbReference type="InterPro" id="IPR020003">
    <property type="entry name" value="ATPase_a/bsu_AS"/>
</dbReference>
<dbReference type="InterPro" id="IPR004100">
    <property type="entry name" value="ATPase_F1/V1/A1_a/bsu_N"/>
</dbReference>
<dbReference type="InterPro" id="IPR036121">
    <property type="entry name" value="ATPase_F1/V1/A1_a/bsu_N_sf"/>
</dbReference>
<dbReference type="InterPro" id="IPR000194">
    <property type="entry name" value="ATPase_F1/V1/A1_a/bsu_nucl-bd"/>
</dbReference>
<dbReference type="InterPro" id="IPR027417">
    <property type="entry name" value="P-loop_NTPase"/>
</dbReference>
<dbReference type="NCBIfam" id="TIGR00962">
    <property type="entry name" value="atpA"/>
    <property type="match status" value="1"/>
</dbReference>
<dbReference type="NCBIfam" id="NF009884">
    <property type="entry name" value="PRK13343.1"/>
    <property type="match status" value="1"/>
</dbReference>
<dbReference type="PANTHER" id="PTHR48082">
    <property type="entry name" value="ATP SYNTHASE SUBUNIT ALPHA, MITOCHONDRIAL"/>
    <property type="match status" value="1"/>
</dbReference>
<dbReference type="PANTHER" id="PTHR48082:SF2">
    <property type="entry name" value="ATP SYNTHASE SUBUNIT ALPHA, MITOCHONDRIAL"/>
    <property type="match status" value="1"/>
</dbReference>
<dbReference type="Pfam" id="PF00006">
    <property type="entry name" value="ATP-synt_ab"/>
    <property type="match status" value="1"/>
</dbReference>
<dbReference type="Pfam" id="PF00306">
    <property type="entry name" value="ATP-synt_ab_C"/>
    <property type="match status" value="1"/>
</dbReference>
<dbReference type="Pfam" id="PF02874">
    <property type="entry name" value="ATP-synt_ab_N"/>
    <property type="match status" value="1"/>
</dbReference>
<dbReference type="PIRSF" id="PIRSF039088">
    <property type="entry name" value="F_ATPase_subunit_alpha"/>
    <property type="match status" value="1"/>
</dbReference>
<dbReference type="SUPFAM" id="SSF47917">
    <property type="entry name" value="C-terminal domain of alpha and beta subunits of F1 ATP synthase"/>
    <property type="match status" value="1"/>
</dbReference>
<dbReference type="SUPFAM" id="SSF50615">
    <property type="entry name" value="N-terminal domain of alpha and beta subunits of F1 ATP synthase"/>
    <property type="match status" value="1"/>
</dbReference>
<dbReference type="SUPFAM" id="SSF52540">
    <property type="entry name" value="P-loop containing nucleoside triphosphate hydrolases"/>
    <property type="match status" value="1"/>
</dbReference>
<dbReference type="PROSITE" id="PS00152">
    <property type="entry name" value="ATPASE_ALPHA_BETA"/>
    <property type="match status" value="1"/>
</dbReference>
<comment type="function">
    <text evidence="1">Produces ATP from ADP in the presence of a proton gradient across the membrane. The alpha chain is a regulatory subunit.</text>
</comment>
<comment type="catalytic activity">
    <reaction evidence="1">
        <text>ATP + H2O + 4 H(+)(in) = ADP + phosphate + 5 H(+)(out)</text>
        <dbReference type="Rhea" id="RHEA:57720"/>
        <dbReference type="ChEBI" id="CHEBI:15377"/>
        <dbReference type="ChEBI" id="CHEBI:15378"/>
        <dbReference type="ChEBI" id="CHEBI:30616"/>
        <dbReference type="ChEBI" id="CHEBI:43474"/>
        <dbReference type="ChEBI" id="CHEBI:456216"/>
        <dbReference type="EC" id="7.1.2.2"/>
    </reaction>
</comment>
<comment type="subunit">
    <text evidence="1">F-type ATPases have 2 components, CF(1) - the catalytic core - and CF(0) - the membrane proton channel. CF(1) has five subunits: alpha(3), beta(3), gamma(1), delta(1), epsilon(1). CF(0) has four main subunits: a, b, b' and c.</text>
</comment>
<comment type="subcellular location">
    <subcellularLocation>
        <location evidence="1">Plastid</location>
        <location evidence="1">Chloroplast thylakoid membrane</location>
        <topology evidence="1">Peripheral membrane protein</topology>
    </subcellularLocation>
</comment>
<comment type="similarity">
    <text evidence="1">Belongs to the ATPase alpha/beta chains family.</text>
</comment>
<geneLocation type="chloroplast"/>
<sequence>MVTIRAEEISNIIRERIEQYNREVKIVNTGTVLQVGDGIARIHGLDEVMAGELVEFAEGTIGIALNLESNNVGVVLMGDGLMIQEGSSVKATGRIAQIPVSEAYLGRVINALAKPIDGRGEILASEYRLIESPAPGIISRRSVYEPLQTGLIAIDSMIPIGRGQRELIIGDRQTGKTAVATDTILNQKGQNVICVYVAIGQKASSVAQVVTTFQERGAMEYTIVVAETADSPATLQYLAPYTGAALAEYFMYRQRHTLIIYDDLSKQAQAYRQMSLLLRRPPGREAYPGDVFYLHSRLLERAAKPSSRLGEGSMTALPIVETQSGDVSAYIPTNVISITDGQIFLSADLFNAGIRPAINVGISVSRVGSAAQIKAMKQVAGKLKLELAQFAELEAFAQFASDLDKATQNQLARGQRLRELLKQSQSSPLAVDEQIVTIYTGTNGYLDQLEIGQVKKFIVQLRTHLRTNKPQFQEIISSTKVFTEQAEALLKEAIQEQMELFLLQEQT</sequence>